<organism>
    <name type="scientific">Sus scrofa</name>
    <name type="common">Pig</name>
    <dbReference type="NCBI Taxonomy" id="9823"/>
    <lineage>
        <taxon>Eukaryota</taxon>
        <taxon>Metazoa</taxon>
        <taxon>Chordata</taxon>
        <taxon>Craniata</taxon>
        <taxon>Vertebrata</taxon>
        <taxon>Euteleostomi</taxon>
        <taxon>Mammalia</taxon>
        <taxon>Eutheria</taxon>
        <taxon>Laurasiatheria</taxon>
        <taxon>Artiodactyla</taxon>
        <taxon>Suina</taxon>
        <taxon>Suidae</taxon>
        <taxon>Sus</taxon>
    </lineage>
</organism>
<keyword id="KW-0903">Direct protein sequencing</keyword>
<keyword id="KW-0349">Heme</keyword>
<keyword id="KW-0408">Iron</keyword>
<keyword id="KW-0479">Metal-binding</keyword>
<keyword id="KW-0561">Oxygen transport</keyword>
<keyword id="KW-1185">Reference proteome</keyword>
<keyword id="KW-0813">Transport</keyword>
<proteinExistence type="evidence at protein level"/>
<sequence>VHFTAEEKSVITGLWGKVNVEETGGEAVGRLLVVYPWTQRFFDSFGNMSSPSAIMGNPKVKAHGKKVLTSFGDAVKNMDNLKGTFAKLSELHCDKLHVDPENFRLLGNMIVIILASHFGGEFTPEVQAAWQKLVAGVATALAHKYH</sequence>
<dbReference type="PIR" id="A02422">
    <property type="entry name" value="HTPG"/>
</dbReference>
<dbReference type="SMR" id="P04246"/>
<dbReference type="FunCoup" id="P04246">
    <property type="interactions" value="774"/>
</dbReference>
<dbReference type="IntAct" id="P04246">
    <property type="interactions" value="1"/>
</dbReference>
<dbReference type="PeptideAtlas" id="P04246"/>
<dbReference type="HOGENOM" id="CLU_003827_10_0_1"/>
<dbReference type="InParanoid" id="P04246"/>
<dbReference type="OMA" id="ICGNPQV"/>
<dbReference type="Proteomes" id="UP000008227">
    <property type="component" value="Unplaced"/>
</dbReference>
<dbReference type="Proteomes" id="UP000314985">
    <property type="component" value="Unplaced"/>
</dbReference>
<dbReference type="Proteomes" id="UP000694570">
    <property type="component" value="Unplaced"/>
</dbReference>
<dbReference type="Proteomes" id="UP000694571">
    <property type="component" value="Unplaced"/>
</dbReference>
<dbReference type="Proteomes" id="UP000694720">
    <property type="component" value="Unplaced"/>
</dbReference>
<dbReference type="Proteomes" id="UP000694722">
    <property type="component" value="Unplaced"/>
</dbReference>
<dbReference type="Proteomes" id="UP000694723">
    <property type="component" value="Unplaced"/>
</dbReference>
<dbReference type="Proteomes" id="UP000694724">
    <property type="component" value="Unplaced"/>
</dbReference>
<dbReference type="Proteomes" id="UP000694725">
    <property type="component" value="Unplaced"/>
</dbReference>
<dbReference type="Proteomes" id="UP000694726">
    <property type="component" value="Unplaced"/>
</dbReference>
<dbReference type="Proteomes" id="UP000694727">
    <property type="component" value="Unplaced"/>
</dbReference>
<dbReference type="Proteomes" id="UP000694728">
    <property type="component" value="Unplaced"/>
</dbReference>
<dbReference type="GO" id="GO:0031838">
    <property type="term" value="C:haptoglobin-hemoglobin complex"/>
    <property type="evidence" value="ECO:0000318"/>
    <property type="project" value="GO_Central"/>
</dbReference>
<dbReference type="GO" id="GO:0005833">
    <property type="term" value="C:hemoglobin complex"/>
    <property type="evidence" value="ECO:0000318"/>
    <property type="project" value="GO_Central"/>
</dbReference>
<dbReference type="GO" id="GO:0020037">
    <property type="term" value="F:heme binding"/>
    <property type="evidence" value="ECO:0000318"/>
    <property type="project" value="GO_Central"/>
</dbReference>
<dbReference type="GO" id="GO:0031721">
    <property type="term" value="F:hemoglobin alpha binding"/>
    <property type="evidence" value="ECO:0000318"/>
    <property type="project" value="GO_Central"/>
</dbReference>
<dbReference type="GO" id="GO:0046872">
    <property type="term" value="F:metal ion binding"/>
    <property type="evidence" value="ECO:0007669"/>
    <property type="project" value="UniProtKB-KW"/>
</dbReference>
<dbReference type="GO" id="GO:0019825">
    <property type="term" value="F:oxygen binding"/>
    <property type="evidence" value="ECO:0000318"/>
    <property type="project" value="GO_Central"/>
</dbReference>
<dbReference type="GO" id="GO:0005344">
    <property type="term" value="F:oxygen carrier activity"/>
    <property type="evidence" value="ECO:0000318"/>
    <property type="project" value="GO_Central"/>
</dbReference>
<dbReference type="GO" id="GO:0098869">
    <property type="term" value="P:cellular oxidant detoxification"/>
    <property type="evidence" value="ECO:0007669"/>
    <property type="project" value="GOC"/>
</dbReference>
<dbReference type="GO" id="GO:0042744">
    <property type="term" value="P:hydrogen peroxide catabolic process"/>
    <property type="evidence" value="ECO:0000318"/>
    <property type="project" value="GO_Central"/>
</dbReference>
<dbReference type="CDD" id="cd08925">
    <property type="entry name" value="Hb-beta-like"/>
    <property type="match status" value="1"/>
</dbReference>
<dbReference type="FunFam" id="1.10.490.10:FF:000001">
    <property type="entry name" value="Hemoglobin subunit beta"/>
    <property type="match status" value="1"/>
</dbReference>
<dbReference type="Gene3D" id="1.10.490.10">
    <property type="entry name" value="Globins"/>
    <property type="match status" value="1"/>
</dbReference>
<dbReference type="InterPro" id="IPR000971">
    <property type="entry name" value="Globin"/>
</dbReference>
<dbReference type="InterPro" id="IPR009050">
    <property type="entry name" value="Globin-like_sf"/>
</dbReference>
<dbReference type="InterPro" id="IPR012292">
    <property type="entry name" value="Globin/Proto"/>
</dbReference>
<dbReference type="InterPro" id="IPR002337">
    <property type="entry name" value="Hemoglobin_b"/>
</dbReference>
<dbReference type="InterPro" id="IPR050056">
    <property type="entry name" value="Hemoglobin_oxygen_transport"/>
</dbReference>
<dbReference type="PANTHER" id="PTHR11442">
    <property type="entry name" value="HEMOGLOBIN FAMILY MEMBER"/>
    <property type="match status" value="1"/>
</dbReference>
<dbReference type="PANTHER" id="PTHR11442:SF7">
    <property type="entry name" value="HEMOGLOBIN SUBUNIT EPSILON"/>
    <property type="match status" value="1"/>
</dbReference>
<dbReference type="Pfam" id="PF00042">
    <property type="entry name" value="Globin"/>
    <property type="match status" value="1"/>
</dbReference>
<dbReference type="PRINTS" id="PR00814">
    <property type="entry name" value="BETAHAEM"/>
</dbReference>
<dbReference type="SUPFAM" id="SSF46458">
    <property type="entry name" value="Globin-like"/>
    <property type="match status" value="1"/>
</dbReference>
<dbReference type="PROSITE" id="PS01033">
    <property type="entry name" value="GLOBIN"/>
    <property type="match status" value="1"/>
</dbReference>
<comment type="miscellaneous">
    <text>Hemoglobin theta chain is an embryonic beta-type chain.</text>
</comment>
<comment type="similarity">
    <text evidence="1">Belongs to the globin family.</text>
</comment>
<evidence type="ECO:0000255" key="1">
    <source>
        <dbReference type="PROSITE-ProRule" id="PRU00238"/>
    </source>
</evidence>
<name>HBT_PIG</name>
<protein>
    <recommendedName>
        <fullName>Hemoglobin subunit theta</fullName>
    </recommendedName>
    <alternativeName>
        <fullName>Hemoglobin theta chain</fullName>
    </alternativeName>
    <alternativeName>
        <fullName>Theta-globin</fullName>
    </alternativeName>
</protein>
<accession>P04246</accession>
<feature type="chain" id="PRO_0000053275" description="Hemoglobin subunit theta">
    <location>
        <begin position="1"/>
        <end position="146"/>
    </location>
</feature>
<feature type="domain" description="Globin" evidence="1">
    <location>
        <begin position="2"/>
        <end position="146"/>
    </location>
</feature>
<feature type="binding site" description="distal binding residue">
    <location>
        <position position="63"/>
    </location>
    <ligand>
        <name>heme b</name>
        <dbReference type="ChEBI" id="CHEBI:60344"/>
    </ligand>
    <ligandPart>
        <name>Fe</name>
        <dbReference type="ChEBI" id="CHEBI:18248"/>
    </ligandPart>
</feature>
<feature type="binding site" description="proximal binding residue">
    <location>
        <position position="92"/>
    </location>
    <ligand>
        <name>heme b</name>
        <dbReference type="ChEBI" id="CHEBI:60344"/>
    </ligand>
    <ligandPart>
        <name>Fe</name>
        <dbReference type="ChEBI" id="CHEBI:18248"/>
    </ligandPart>
</feature>
<reference key="1">
    <citation type="journal article" date="1984" name="Hoppe-Seyler's Z. Physiol. Chem.">
        <title>Pre- and perinatal oxygen transport in mammals: the embryonic hemoglobins of the domestic pig (Sus scrofa domestica).</title>
        <authorList>
            <person name="Bieber F.A."/>
            <person name="Braunitzer G."/>
        </authorList>
    </citation>
    <scope>PROTEIN SEQUENCE</scope>
</reference>